<gene>
    <name evidence="1" type="primary">nrdR</name>
    <name type="ordered locus">BCA_4690</name>
</gene>
<evidence type="ECO:0000255" key="1">
    <source>
        <dbReference type="HAMAP-Rule" id="MF_00440"/>
    </source>
</evidence>
<proteinExistence type="inferred from homology"/>
<comment type="function">
    <text evidence="1">Negatively regulates transcription of bacterial ribonucleotide reductase nrd genes and operons by binding to NrdR-boxes.</text>
</comment>
<comment type="cofactor">
    <cofactor evidence="1">
        <name>Zn(2+)</name>
        <dbReference type="ChEBI" id="CHEBI:29105"/>
    </cofactor>
    <text evidence="1">Binds 1 zinc ion.</text>
</comment>
<comment type="similarity">
    <text evidence="1">Belongs to the NrdR family.</text>
</comment>
<protein>
    <recommendedName>
        <fullName evidence="1">Transcriptional repressor NrdR</fullName>
    </recommendedName>
</protein>
<sequence>MRCPSCSHNGTRVLDSRPVDEGRSIRRRRECESCLSRFTTFERVEESPLIVVKKEGTREEFNKEKILRGLIKACEKRPVSLRQLEEVTQSVERELRNLGISEVKSDMIGEIVMEELRDIDDVAYVRFASVYRQFKDLNVFIEELKDILQKERE</sequence>
<keyword id="KW-0067">ATP-binding</keyword>
<keyword id="KW-0238">DNA-binding</keyword>
<keyword id="KW-0479">Metal-binding</keyword>
<keyword id="KW-0547">Nucleotide-binding</keyword>
<keyword id="KW-0678">Repressor</keyword>
<keyword id="KW-0804">Transcription</keyword>
<keyword id="KW-0805">Transcription regulation</keyword>
<keyword id="KW-0862">Zinc</keyword>
<keyword id="KW-0863">Zinc-finger</keyword>
<dbReference type="EMBL" id="CP001407">
    <property type="protein sequence ID" value="ACO26194.1"/>
    <property type="molecule type" value="Genomic_DNA"/>
</dbReference>
<dbReference type="RefSeq" id="WP_001203687.1">
    <property type="nucleotide sequence ID" value="NZ_CP009318.1"/>
</dbReference>
<dbReference type="SMR" id="C1EUS4"/>
<dbReference type="GeneID" id="93006530"/>
<dbReference type="KEGG" id="bcx:BCA_4690"/>
<dbReference type="PATRIC" id="fig|572264.18.peg.4638"/>
<dbReference type="Proteomes" id="UP000002210">
    <property type="component" value="Chromosome"/>
</dbReference>
<dbReference type="GO" id="GO:0005524">
    <property type="term" value="F:ATP binding"/>
    <property type="evidence" value="ECO:0007669"/>
    <property type="project" value="UniProtKB-KW"/>
</dbReference>
<dbReference type="GO" id="GO:0003677">
    <property type="term" value="F:DNA binding"/>
    <property type="evidence" value="ECO:0007669"/>
    <property type="project" value="UniProtKB-KW"/>
</dbReference>
<dbReference type="GO" id="GO:0008270">
    <property type="term" value="F:zinc ion binding"/>
    <property type="evidence" value="ECO:0007669"/>
    <property type="project" value="UniProtKB-UniRule"/>
</dbReference>
<dbReference type="GO" id="GO:0045892">
    <property type="term" value="P:negative regulation of DNA-templated transcription"/>
    <property type="evidence" value="ECO:0007669"/>
    <property type="project" value="UniProtKB-UniRule"/>
</dbReference>
<dbReference type="HAMAP" id="MF_00440">
    <property type="entry name" value="NrdR"/>
    <property type="match status" value="1"/>
</dbReference>
<dbReference type="InterPro" id="IPR005144">
    <property type="entry name" value="ATP-cone_dom"/>
</dbReference>
<dbReference type="InterPro" id="IPR055173">
    <property type="entry name" value="NrdR-like_N"/>
</dbReference>
<dbReference type="InterPro" id="IPR003796">
    <property type="entry name" value="RNR_NrdR-like"/>
</dbReference>
<dbReference type="NCBIfam" id="TIGR00244">
    <property type="entry name" value="transcriptional regulator NrdR"/>
    <property type="match status" value="1"/>
</dbReference>
<dbReference type="PANTHER" id="PTHR30455">
    <property type="entry name" value="TRANSCRIPTIONAL REPRESSOR NRDR"/>
    <property type="match status" value="1"/>
</dbReference>
<dbReference type="PANTHER" id="PTHR30455:SF2">
    <property type="entry name" value="TRANSCRIPTIONAL REPRESSOR NRDR"/>
    <property type="match status" value="1"/>
</dbReference>
<dbReference type="Pfam" id="PF03477">
    <property type="entry name" value="ATP-cone"/>
    <property type="match status" value="1"/>
</dbReference>
<dbReference type="Pfam" id="PF22811">
    <property type="entry name" value="Zn_ribbon_NrdR"/>
    <property type="match status" value="1"/>
</dbReference>
<dbReference type="PROSITE" id="PS51161">
    <property type="entry name" value="ATP_CONE"/>
    <property type="match status" value="1"/>
</dbReference>
<feature type="chain" id="PRO_1000191780" description="Transcriptional repressor NrdR">
    <location>
        <begin position="1"/>
        <end position="153"/>
    </location>
</feature>
<feature type="domain" description="ATP-cone" evidence="1">
    <location>
        <begin position="49"/>
        <end position="139"/>
    </location>
</feature>
<feature type="zinc finger region" evidence="1">
    <location>
        <begin position="3"/>
        <end position="34"/>
    </location>
</feature>
<reference key="1">
    <citation type="submission" date="2009-02" db="EMBL/GenBank/DDBJ databases">
        <title>Genome sequence of Bacillus cereus 03BB102.</title>
        <authorList>
            <person name="Dodson R.J."/>
            <person name="Jackson P."/>
            <person name="Munk A.C."/>
            <person name="Brettin T."/>
            <person name="Bruce D."/>
            <person name="Detter C."/>
            <person name="Tapia R."/>
            <person name="Han C."/>
            <person name="Sutton G."/>
            <person name="Sims D."/>
        </authorList>
    </citation>
    <scope>NUCLEOTIDE SEQUENCE [LARGE SCALE GENOMIC DNA]</scope>
    <source>
        <strain>03BB102</strain>
    </source>
</reference>
<name>NRDR_BACC3</name>
<accession>C1EUS4</accession>
<organism>
    <name type="scientific">Bacillus cereus (strain 03BB102)</name>
    <dbReference type="NCBI Taxonomy" id="572264"/>
    <lineage>
        <taxon>Bacteria</taxon>
        <taxon>Bacillati</taxon>
        <taxon>Bacillota</taxon>
        <taxon>Bacilli</taxon>
        <taxon>Bacillales</taxon>
        <taxon>Bacillaceae</taxon>
        <taxon>Bacillus</taxon>
        <taxon>Bacillus cereus group</taxon>
    </lineage>
</organism>